<feature type="chain" id="PRO_0000350053" description="Probable RNA methyltransferase BAV1540">
    <location>
        <begin position="1"/>
        <end position="351"/>
    </location>
</feature>
<feature type="domain" description="Radical SAM core" evidence="3">
    <location>
        <begin position="93"/>
        <end position="319"/>
    </location>
</feature>
<feature type="active site" description="Proton acceptor" evidence="2">
    <location>
        <position position="90"/>
    </location>
</feature>
<feature type="active site" description="S-methylcysteine intermediate" evidence="1">
    <location>
        <position position="324"/>
    </location>
</feature>
<feature type="binding site" evidence="1">
    <location>
        <position position="107"/>
    </location>
    <ligand>
        <name>[4Fe-4S] cluster</name>
        <dbReference type="ChEBI" id="CHEBI:49883"/>
        <note>4Fe-4S-S-AdoMet</note>
    </ligand>
</feature>
<feature type="binding site" evidence="1">
    <location>
        <position position="111"/>
    </location>
    <ligand>
        <name>[4Fe-4S] cluster</name>
        <dbReference type="ChEBI" id="CHEBI:49883"/>
        <note>4Fe-4S-S-AdoMet</note>
    </ligand>
</feature>
<feature type="binding site" evidence="1">
    <location>
        <position position="114"/>
    </location>
    <ligand>
        <name>[4Fe-4S] cluster</name>
        <dbReference type="ChEBI" id="CHEBI:49883"/>
        <note>4Fe-4S-S-AdoMet</note>
    </ligand>
</feature>
<feature type="binding site" evidence="1">
    <location>
        <begin position="152"/>
        <end position="153"/>
    </location>
    <ligand>
        <name>S-adenosyl-L-methionine</name>
        <dbReference type="ChEBI" id="CHEBI:59789"/>
    </ligand>
</feature>
<feature type="binding site" evidence="1">
    <location>
        <position position="182"/>
    </location>
    <ligand>
        <name>S-adenosyl-L-methionine</name>
        <dbReference type="ChEBI" id="CHEBI:59789"/>
    </ligand>
</feature>
<feature type="binding site" evidence="1">
    <location>
        <begin position="205"/>
        <end position="207"/>
    </location>
    <ligand>
        <name>S-adenosyl-L-methionine</name>
        <dbReference type="ChEBI" id="CHEBI:59789"/>
    </ligand>
</feature>
<feature type="binding site" evidence="1">
    <location>
        <position position="281"/>
    </location>
    <ligand>
        <name>S-adenosyl-L-methionine</name>
        <dbReference type="ChEBI" id="CHEBI:59789"/>
    </ligand>
</feature>
<feature type="disulfide bond" description="(transient)" evidence="1">
    <location>
        <begin position="100"/>
        <end position="324"/>
    </location>
</feature>
<gene>
    <name type="ordered locus">BAV1540</name>
</gene>
<proteinExistence type="inferred from homology"/>
<reference key="1">
    <citation type="journal article" date="2006" name="J. Bacteriol.">
        <title>Comparison of the genome sequence of the poultry pathogen Bordetella avium with those of B. bronchiseptica, B. pertussis, and B. parapertussis reveals extensive diversity in surface structures associated with host interaction.</title>
        <authorList>
            <person name="Sebaihia M."/>
            <person name="Preston A."/>
            <person name="Maskell D.J."/>
            <person name="Kuzmiak H."/>
            <person name="Connell T.D."/>
            <person name="King N.D."/>
            <person name="Orndorff P.E."/>
            <person name="Miyamoto D.M."/>
            <person name="Thomson N.R."/>
            <person name="Harris D."/>
            <person name="Goble A."/>
            <person name="Lord A."/>
            <person name="Murphy L."/>
            <person name="Quail M.A."/>
            <person name="Rutter S."/>
            <person name="Squares R."/>
            <person name="Squares S."/>
            <person name="Woodward J."/>
            <person name="Parkhill J."/>
            <person name="Temple L.M."/>
        </authorList>
    </citation>
    <scope>NUCLEOTIDE SEQUENCE [LARGE SCALE GENOMIC DNA]</scope>
    <source>
        <strain>197N</strain>
    </source>
</reference>
<organism>
    <name type="scientific">Bordetella avium (strain 197N)</name>
    <dbReference type="NCBI Taxonomy" id="360910"/>
    <lineage>
        <taxon>Bacteria</taxon>
        <taxon>Pseudomonadati</taxon>
        <taxon>Pseudomonadota</taxon>
        <taxon>Betaproteobacteria</taxon>
        <taxon>Burkholderiales</taxon>
        <taxon>Alcaligenaceae</taxon>
        <taxon>Bordetella</taxon>
    </lineage>
</organism>
<protein>
    <recommendedName>
        <fullName>Probable RNA methyltransferase BAV1540</fullName>
        <ecNumber>2.1.1.-</ecNumber>
    </recommendedName>
</protein>
<sequence>MRFSDFDLRLAAFGAQPVHRGRIARVWLNGQALDTGTRRRHSEHFLPLALREALPALTAELDGLARVHSEHAGSDGSRLLVALADGQMVESVLLPRDGLCVSTQVGCAVGCRFCMTGKSGLIRQVTSMEILAQVVLARRRRAVKKVVFMGMGEPAHNLENVLEAINLLGTEGNIGHKNLVFSTVGDRRVFEALPQQRVKPALALSLHTTKAELRARLLPRAPSIAPDELVELGERYARHIGYPIQYQWTLLKGVNDGNDELDAVLRLLKGKYGVLNVIPFNSLEGDDYQRPDLERIREIVRYVHSRGVLVKVRNSAGQDVDGGCGQLRARATGADQVVTLRRAPRPQAVQA</sequence>
<name>Y1540_BORA1</name>
<accession>Q2L1Z5</accession>
<comment type="cofactor">
    <cofactor evidence="1">
        <name>[4Fe-4S] cluster</name>
        <dbReference type="ChEBI" id="CHEBI:49883"/>
    </cofactor>
    <text evidence="1">Binds 1 [4Fe-4S] cluster. The cluster is coordinated with 3 cysteines and an exchangeable S-adenosyl-L-methionine.</text>
</comment>
<comment type="subcellular location">
    <subcellularLocation>
        <location evidence="4">Cytoplasm</location>
    </subcellularLocation>
</comment>
<comment type="similarity">
    <text evidence="4">Belongs to the radical SAM superfamily. RlmN family.</text>
</comment>
<evidence type="ECO:0000250" key="1"/>
<evidence type="ECO:0000255" key="2"/>
<evidence type="ECO:0000255" key="3">
    <source>
        <dbReference type="PROSITE-ProRule" id="PRU01266"/>
    </source>
</evidence>
<evidence type="ECO:0000305" key="4"/>
<keyword id="KW-0004">4Fe-4S</keyword>
<keyword id="KW-0963">Cytoplasm</keyword>
<keyword id="KW-1015">Disulfide bond</keyword>
<keyword id="KW-0408">Iron</keyword>
<keyword id="KW-0411">Iron-sulfur</keyword>
<keyword id="KW-0479">Metal-binding</keyword>
<keyword id="KW-0489">Methyltransferase</keyword>
<keyword id="KW-1185">Reference proteome</keyword>
<keyword id="KW-0949">S-adenosyl-L-methionine</keyword>
<keyword id="KW-0808">Transferase</keyword>
<dbReference type="EC" id="2.1.1.-"/>
<dbReference type="EMBL" id="AM167904">
    <property type="protein sequence ID" value="CAJ49153.1"/>
    <property type="molecule type" value="Genomic_DNA"/>
</dbReference>
<dbReference type="RefSeq" id="WP_012417217.1">
    <property type="nucleotide sequence ID" value="NC_010645.1"/>
</dbReference>
<dbReference type="SMR" id="Q2L1Z5"/>
<dbReference type="STRING" id="360910.BAV1540"/>
<dbReference type="KEGG" id="bav:BAV1540"/>
<dbReference type="eggNOG" id="COG0820">
    <property type="taxonomic scope" value="Bacteria"/>
</dbReference>
<dbReference type="HOGENOM" id="CLU_029101_3_3_4"/>
<dbReference type="OrthoDB" id="9793973at2"/>
<dbReference type="Proteomes" id="UP000001977">
    <property type="component" value="Chromosome"/>
</dbReference>
<dbReference type="GO" id="GO:0005737">
    <property type="term" value="C:cytoplasm"/>
    <property type="evidence" value="ECO:0007669"/>
    <property type="project" value="UniProtKB-SubCell"/>
</dbReference>
<dbReference type="GO" id="GO:0051539">
    <property type="term" value="F:4 iron, 4 sulfur cluster binding"/>
    <property type="evidence" value="ECO:0007669"/>
    <property type="project" value="UniProtKB-KW"/>
</dbReference>
<dbReference type="GO" id="GO:0046872">
    <property type="term" value="F:metal ion binding"/>
    <property type="evidence" value="ECO:0007669"/>
    <property type="project" value="UniProtKB-KW"/>
</dbReference>
<dbReference type="GO" id="GO:0008173">
    <property type="term" value="F:RNA methyltransferase activity"/>
    <property type="evidence" value="ECO:0007669"/>
    <property type="project" value="InterPro"/>
</dbReference>
<dbReference type="GO" id="GO:0070475">
    <property type="term" value="P:rRNA base methylation"/>
    <property type="evidence" value="ECO:0007669"/>
    <property type="project" value="TreeGrafter"/>
</dbReference>
<dbReference type="GO" id="GO:0030488">
    <property type="term" value="P:tRNA methylation"/>
    <property type="evidence" value="ECO:0007669"/>
    <property type="project" value="TreeGrafter"/>
</dbReference>
<dbReference type="CDD" id="cd01335">
    <property type="entry name" value="Radical_SAM"/>
    <property type="match status" value="1"/>
</dbReference>
<dbReference type="Gene3D" id="3.20.20.70">
    <property type="entry name" value="Aldolase class I"/>
    <property type="match status" value="1"/>
</dbReference>
<dbReference type="InterPro" id="IPR013785">
    <property type="entry name" value="Aldolase_TIM"/>
</dbReference>
<dbReference type="InterPro" id="IPR040072">
    <property type="entry name" value="Methyltransferase_A"/>
</dbReference>
<dbReference type="InterPro" id="IPR004383">
    <property type="entry name" value="rRNA_lsu_MTrfase_RlmN/Cfr"/>
</dbReference>
<dbReference type="InterPro" id="IPR007197">
    <property type="entry name" value="rSAM"/>
</dbReference>
<dbReference type="NCBIfam" id="NF011034">
    <property type="entry name" value="PRK14464.1"/>
    <property type="match status" value="1"/>
</dbReference>
<dbReference type="PANTHER" id="PTHR30544">
    <property type="entry name" value="23S RRNA METHYLTRANSFERASE"/>
    <property type="match status" value="1"/>
</dbReference>
<dbReference type="PANTHER" id="PTHR30544:SF5">
    <property type="entry name" value="RADICAL SAM CORE DOMAIN-CONTAINING PROTEIN"/>
    <property type="match status" value="1"/>
</dbReference>
<dbReference type="Pfam" id="PF04055">
    <property type="entry name" value="Radical_SAM"/>
    <property type="match status" value="1"/>
</dbReference>
<dbReference type="PIRSF" id="PIRSF006004">
    <property type="entry name" value="CHP00048"/>
    <property type="match status" value="1"/>
</dbReference>
<dbReference type="SFLD" id="SFLDF00275">
    <property type="entry name" value="adenosine_C2_methyltransferase"/>
    <property type="match status" value="1"/>
</dbReference>
<dbReference type="SFLD" id="SFLDG01062">
    <property type="entry name" value="methyltransferase_(Class_A)"/>
    <property type="match status" value="1"/>
</dbReference>
<dbReference type="SUPFAM" id="SSF102114">
    <property type="entry name" value="Radical SAM enzymes"/>
    <property type="match status" value="1"/>
</dbReference>
<dbReference type="PROSITE" id="PS51918">
    <property type="entry name" value="RADICAL_SAM"/>
    <property type="match status" value="1"/>
</dbReference>